<accession>Q8X0Z0</accession>
<keyword id="KW-0125">Carotenoid biosynthesis</keyword>
<keyword id="KW-0472">Membrane</keyword>
<keyword id="KW-0560">Oxidoreductase</keyword>
<keyword id="KW-0812">Transmembrane</keyword>
<keyword id="KW-1133">Transmembrane helix</keyword>
<gene>
    <name evidence="7" type="primary">carB</name>
</gene>
<comment type="function">
    <text evidence="3 4 6 9">Phytoene desaturase; part of the car gene cluster that mediates the biosynthesis of neurosporaxanthin, a carboxylic apocarotenoid acting as an essential protective pigments and leading to orange pigmentation (PubMed:10905351, PubMed:12172798, PubMed:19645721). Converts phytoene into lycopene via the intermediates phytofluene, zeta-carotene and neurosporene; and further desaturates gamma-carotene into torulene (PubMed:10905351, PubMed:12172798, PubMed:19645721). Neurosporaxanthin is synthesized from geranyl-geranyl pyrophosphate (GGPP) through several enzymatic activities. Phytoene synthase activity performed by the bifunctional enzyme carAR first produces phytoene from geranyl-geranyl pyrophosphate (GGPP). The phytoene dehydrogenase carB then introduces 4 desaturations to lead to lycopene which is substrate of the carotene cyclase activity of carAR that leads to the production of gamma-carotene. CarB then performs a 5th desaturation reaction to yield torulene. Torulene is the substrate of the dioxidase carT that breaks the molecule, removing five carbon atoms to yield beta-apo-4'-carotenal, whereas the aldehyde dehydrogenase carD mediates the last step by converting beta-apo-4'-carotenal into neurosporaxanthin (Probable).</text>
</comment>
<comment type="catalytic activity">
    <reaction evidence="6">
        <text>15-cis-phytoene + A = all-trans-phytofluene + AH2</text>
        <dbReference type="Rhea" id="RHEA:30603"/>
        <dbReference type="ChEBI" id="CHEBI:13193"/>
        <dbReference type="ChEBI" id="CHEBI:17499"/>
        <dbReference type="ChEBI" id="CHEBI:27787"/>
        <dbReference type="ChEBI" id="CHEBI:28129"/>
    </reaction>
    <physiologicalReaction direction="left-to-right" evidence="6">
        <dbReference type="Rhea" id="RHEA:30604"/>
    </physiologicalReaction>
</comment>
<comment type="catalytic activity">
    <reaction evidence="6">
        <text>all-trans-phytofluene + A = all-trans-zeta-carotene + AH2</text>
        <dbReference type="Rhea" id="RHEA:30607"/>
        <dbReference type="ChEBI" id="CHEBI:13193"/>
        <dbReference type="ChEBI" id="CHEBI:17499"/>
        <dbReference type="ChEBI" id="CHEBI:28068"/>
        <dbReference type="ChEBI" id="CHEBI:28129"/>
    </reaction>
    <physiologicalReaction direction="left-to-right" evidence="6">
        <dbReference type="Rhea" id="RHEA:30608"/>
    </physiologicalReaction>
</comment>
<comment type="catalytic activity">
    <reaction evidence="6">
        <text>all-trans-zeta-carotene + A = all-trans-neurosporene + AH2</text>
        <dbReference type="Rhea" id="RHEA:30611"/>
        <dbReference type="ChEBI" id="CHEBI:13193"/>
        <dbReference type="ChEBI" id="CHEBI:16833"/>
        <dbReference type="ChEBI" id="CHEBI:17499"/>
        <dbReference type="ChEBI" id="CHEBI:28068"/>
    </reaction>
    <physiologicalReaction direction="left-to-right" evidence="6">
        <dbReference type="Rhea" id="RHEA:30612"/>
    </physiologicalReaction>
</comment>
<comment type="catalytic activity">
    <reaction evidence="6">
        <text>all-trans-neurosporene + A = all-trans-lycopene + AH2</text>
        <dbReference type="Rhea" id="RHEA:30623"/>
        <dbReference type="ChEBI" id="CHEBI:13193"/>
        <dbReference type="ChEBI" id="CHEBI:15948"/>
        <dbReference type="ChEBI" id="CHEBI:16833"/>
        <dbReference type="ChEBI" id="CHEBI:17499"/>
    </reaction>
    <physiologicalReaction direction="left-to-right" evidence="6">
        <dbReference type="Rhea" id="RHEA:30624"/>
    </physiologicalReaction>
</comment>
<comment type="cofactor">
    <cofactor evidence="1">
        <name>NAD(+)</name>
        <dbReference type="ChEBI" id="CHEBI:57540"/>
    </cofactor>
</comment>
<comment type="pathway">
    <text evidence="4">Carotenoid biosynthesis.</text>
</comment>
<comment type="subcellular location">
    <subcellularLocation>
        <location evidence="2">Membrane</location>
        <topology evidence="2">Single-pass membrane protein</topology>
    </subcellularLocation>
</comment>
<comment type="induction">
    <text evidence="4 5">The expression is subject to photoinduction (PubMed:12172798, PubMed:15133714). Expression is slightly induced after 2 hours of incubation at 42 degrees Celsius (PubMed:15133714).</text>
</comment>
<comment type="disruption phenotype">
    <text evidence="4">Leads to the lack of coloured carotenoids and the accumulation of phytoene.</text>
</comment>
<comment type="similarity">
    <text evidence="8">Belongs to the carotenoid/retinoid oxidoreductase family.</text>
</comment>
<proteinExistence type="evidence at protein level"/>
<evidence type="ECO:0000250" key="1">
    <source>
        <dbReference type="UniProtKB" id="P21334"/>
    </source>
</evidence>
<evidence type="ECO:0000255" key="2"/>
<evidence type="ECO:0000269" key="3">
    <source>
    </source>
</evidence>
<evidence type="ECO:0000269" key="4">
    <source>
    </source>
</evidence>
<evidence type="ECO:0000269" key="5">
    <source>
    </source>
</evidence>
<evidence type="ECO:0000269" key="6">
    <source>
    </source>
</evidence>
<evidence type="ECO:0000303" key="7">
    <source>
    </source>
</evidence>
<evidence type="ECO:0000305" key="8"/>
<evidence type="ECO:0000305" key="9">
    <source>
    </source>
</evidence>
<protein>
    <recommendedName>
        <fullName evidence="7">Phytoene desaturase</fullName>
        <ecNumber evidence="4">1.3.99.-</ecNumber>
    </recommendedName>
    <alternativeName>
        <fullName evidence="7">Carotenoid biosynthesis cluster protein B</fullName>
    </alternativeName>
    <alternativeName>
        <fullName evidence="7">Phytoene desaturase (3,4-didehydrolycopene-forming)</fullName>
    </alternativeName>
</protein>
<dbReference type="EC" id="1.3.99.-" evidence="4"/>
<dbReference type="EMBL" id="AJ426418">
    <property type="protein sequence ID" value="CAD19989.2"/>
    <property type="molecule type" value="Genomic_DNA"/>
</dbReference>
<dbReference type="SMR" id="Q8X0Z0"/>
<dbReference type="EnsemblFungi" id="CCT75765">
    <property type="protein sequence ID" value="CCT75765"/>
    <property type="gene ID" value="FFUJ_11803"/>
</dbReference>
<dbReference type="HOGENOM" id="CLU_019722_2_1_1"/>
<dbReference type="OrthoDB" id="7777654at2759"/>
<dbReference type="GO" id="GO:0016020">
    <property type="term" value="C:membrane"/>
    <property type="evidence" value="ECO:0007669"/>
    <property type="project" value="UniProtKB-SubCell"/>
</dbReference>
<dbReference type="GO" id="GO:0016166">
    <property type="term" value="F:phytoene dehydrogenase activity"/>
    <property type="evidence" value="ECO:0000315"/>
    <property type="project" value="UniProtKB"/>
</dbReference>
<dbReference type="GO" id="GO:0016120">
    <property type="term" value="P:carotene biosynthetic process"/>
    <property type="evidence" value="ECO:0000315"/>
    <property type="project" value="UniProtKB"/>
</dbReference>
<dbReference type="GO" id="GO:0016117">
    <property type="term" value="P:carotenoid biosynthetic process"/>
    <property type="evidence" value="ECO:0007669"/>
    <property type="project" value="UniProtKB-KW"/>
</dbReference>
<dbReference type="FunFam" id="3.50.50.60:FF:000171">
    <property type="entry name" value="zeta-carotene-forming phytoene desaturase"/>
    <property type="match status" value="1"/>
</dbReference>
<dbReference type="Gene3D" id="3.50.50.60">
    <property type="entry name" value="FAD/NAD(P)-binding domain"/>
    <property type="match status" value="2"/>
</dbReference>
<dbReference type="InterPro" id="IPR002937">
    <property type="entry name" value="Amino_oxidase"/>
</dbReference>
<dbReference type="InterPro" id="IPR014105">
    <property type="entry name" value="Carotenoid/retinoid_OxRdtase"/>
</dbReference>
<dbReference type="InterPro" id="IPR036188">
    <property type="entry name" value="FAD/NAD-bd_sf"/>
</dbReference>
<dbReference type="InterPro" id="IPR008150">
    <property type="entry name" value="Phytoene_DH_bac_CS"/>
</dbReference>
<dbReference type="NCBIfam" id="TIGR02734">
    <property type="entry name" value="crtI_fam"/>
    <property type="match status" value="1"/>
</dbReference>
<dbReference type="PANTHER" id="PTHR43734">
    <property type="entry name" value="PHYTOENE DESATURASE"/>
    <property type="match status" value="1"/>
</dbReference>
<dbReference type="PANTHER" id="PTHR43734:SF1">
    <property type="entry name" value="PHYTOENE DESATURASE"/>
    <property type="match status" value="1"/>
</dbReference>
<dbReference type="Pfam" id="PF01593">
    <property type="entry name" value="Amino_oxidase"/>
    <property type="match status" value="1"/>
</dbReference>
<dbReference type="SUPFAM" id="SSF51905">
    <property type="entry name" value="FAD/NAD(P)-binding domain"/>
    <property type="match status" value="1"/>
</dbReference>
<dbReference type="PROSITE" id="PS00982">
    <property type="entry name" value="PHYTOENE_DH"/>
    <property type="match status" value="1"/>
</dbReference>
<name>CARB_FUSFU</name>
<sequence length="570" mass="62701">MSDIKKSVIVIGAGVGGVSTAARLAKAGFKVTILEKNDFTGGRCSLIHNDGHRFDQGPSLLLLPRFFHEIFQDLGTSLTAEGVELLKCEPNYNIWFGDGSSFEMSTDLTKMKKAIEAVEGIDGFERYLGFLQESHRHYEVSVESVLRRNFPSILSLARPEVLFNLFNIHPLESIWTRASKYFWTERLRRVFTFGSMYMGMSPFDAPGTYSLLQYTELAEGILYPRGGFHKVVEALVNVGQRLGVEYRLSTGVKSISIDQATGKANGVVLSDGTHLPSDIVISNADLVYTYNNLLPKTSYADSLSKRETSCSSISFYWSASKIVPELNAHNIFLADEYQESFDSIFKEHLIPSEPSFYVNVPSRIDPSAAPEGKDSIVVLVPVGHLLSDSEGTHRGLSKSGNSGGLETSQDWDKMISLARDTVIATMRARIGVDLAPLIENEIINTPFTWQEKFNLDKGAILGLSHSIMNVLAFRPGTQHSKYKNLYFAGASTHPGTGVPVCIAGSKIVAEQILKDSGFKNNQIPWAQDTTKSPKGGLDKMSDSSLTLFQGFLGALVAILLAYYYLVIAAN</sequence>
<organism>
    <name type="scientific">Fusarium fujikuroi</name>
    <name type="common">Bakanae and foot rot disease fungus</name>
    <name type="synonym">Gibberella fujikuroi</name>
    <dbReference type="NCBI Taxonomy" id="5127"/>
    <lineage>
        <taxon>Eukaryota</taxon>
        <taxon>Fungi</taxon>
        <taxon>Dikarya</taxon>
        <taxon>Ascomycota</taxon>
        <taxon>Pezizomycotina</taxon>
        <taxon>Sordariomycetes</taxon>
        <taxon>Hypocreomycetidae</taxon>
        <taxon>Hypocreales</taxon>
        <taxon>Nectriaceae</taxon>
        <taxon>Fusarium</taxon>
        <taxon>Fusarium fujikuroi species complex</taxon>
    </lineage>
</organism>
<reference key="1">
    <citation type="journal article" date="2002" name="Mol. Genet. Genomics">
        <title>A carotenoid biosynthesis gene cluster in Fusarium fujikuroi: the genes carB and carRA.</title>
        <authorList>
            <person name="Linnemannstons P."/>
            <person name="Prado M.M."/>
            <person name="Fernandez-Martin R."/>
            <person name="Tudzynski B."/>
            <person name="Avalos J."/>
        </authorList>
    </citation>
    <scope>NUCLEOTIDE SEQUENCE [GENOMIC DNA]</scope>
    <scope>FUNCTION</scope>
    <scope>DISRUPTION PHENOTYPE</scope>
    <scope>INDUCTION</scope>
</reference>
<reference key="2">
    <citation type="journal article" date="2000" name="Mol. Gen. Genet.">
        <title>Homologous recombination and allele replacement in transformants of Fusarium fujikuroi.</title>
        <authorList>
            <person name="Fernandez-Martin R."/>
            <person name="Cerda-Olmedo E."/>
            <person name="Avalos J."/>
        </authorList>
    </citation>
    <scope>FUNCTION</scope>
</reference>
<reference key="3">
    <citation type="journal article" date="2004" name="Curr. Genet.">
        <title>A gene of the opsin family in the carotenoid gene cluster of Fusarium fujikuroi.</title>
        <authorList>
            <person name="Prado M.M."/>
            <person name="Prado-Cabrero A."/>
            <person name="Fernandez-Martin R."/>
            <person name="Avalos J."/>
        </authorList>
    </citation>
    <scope>INDUCTION</scope>
</reference>
<reference key="4">
    <citation type="journal article" date="2009" name="FEBS J.">
        <title>Deviation of the neurosporaxanthin pathway towards beta-carotene biosynthesis in Fusarium fujikuroi by a point mutation in the phytoene desaturase gene.</title>
        <authorList>
            <person name="Prado-Cabrero A."/>
            <person name="Schaub P."/>
            <person name="Diaz-Sanchez V."/>
            <person name="Estrada A.F."/>
            <person name="Al-Babili S."/>
            <person name="Avalos J."/>
        </authorList>
    </citation>
    <scope>FUNCTION</scope>
    <scope>CATALYTIC ACTIVITY</scope>
    <scope>MUTAGENESIS OF PRO-170</scope>
</reference>
<feature type="chain" id="PRO_0000456840" description="Phytoene desaturase">
    <location>
        <begin position="1"/>
        <end position="570"/>
    </location>
</feature>
<feature type="transmembrane region" description="Helical" evidence="2">
    <location>
        <begin position="547"/>
        <end position="567"/>
    </location>
</feature>
<feature type="mutagenesis site" description="Reduces the ability to catalyze the fifth desaturation step." evidence="6">
    <original>P</original>
    <variation>L</variation>
    <location>
        <position position="170"/>
    </location>
</feature>